<sequence>MGHQVLGLGIAGWSAARLLRAQGKEVWVWDEQDSELLRQRQAELEREGIPVHLGQPFQLLPGVKQVVVSPGIAWDHPLLQEARRQGIEVVGEAELAWPFLEHLPWVGITGTNGKSTTTALVAEMFKVAGLEGIPCGNIGLPLSQVALETWQGRRQPAWIVAELSSYQLEASRHLMQSSPGSPPRIGVWTTFTPDHLERHGTLERYAGFKARLLQRAQWRVVNGEDPYLFRRRQDWENTYWVSLQDPQADVFLRGSTLYIQGEAVAELEDFAERCPGSHNLQNLLLAAAAAHLAGIPNTAIQGAIRSFAGMPHRLERVAQIQVGSTPIRFVNDSKATNYEAGWVALNALSPPIILIAGGRAKQGDPSAWLRLIQAKVARVLLIGEAAPALAQALQEIRYTDLEILPTLDVAVERAFVAACSLAQALDNPAQPITVLLSPACASFDQYSSFEHRGHHFRACCQALVGSLEC</sequence>
<protein>
    <recommendedName>
        <fullName evidence="1">UDP-N-acetylmuramoylalanine--D-glutamate ligase</fullName>
        <ecNumber evidence="1">6.3.2.9</ecNumber>
    </recommendedName>
    <alternativeName>
        <fullName evidence="1">D-glutamic acid-adding enzyme</fullName>
    </alternativeName>
    <alternativeName>
        <fullName evidence="1">UDP-N-acetylmuramoyl-L-alanyl-D-glutamate synthetase</fullName>
    </alternativeName>
</protein>
<organism>
    <name type="scientific">Synechococcus sp. (strain JA-3-3Ab)</name>
    <name type="common">Cyanobacteria bacterium Yellowstone A-Prime</name>
    <dbReference type="NCBI Taxonomy" id="321327"/>
    <lineage>
        <taxon>Bacteria</taxon>
        <taxon>Bacillati</taxon>
        <taxon>Cyanobacteriota</taxon>
        <taxon>Cyanophyceae</taxon>
        <taxon>Synechococcales</taxon>
        <taxon>Synechococcaceae</taxon>
        <taxon>Synechococcus</taxon>
    </lineage>
</organism>
<keyword id="KW-0067">ATP-binding</keyword>
<keyword id="KW-0131">Cell cycle</keyword>
<keyword id="KW-0132">Cell division</keyword>
<keyword id="KW-0133">Cell shape</keyword>
<keyword id="KW-0961">Cell wall biogenesis/degradation</keyword>
<keyword id="KW-0963">Cytoplasm</keyword>
<keyword id="KW-0436">Ligase</keyword>
<keyword id="KW-0547">Nucleotide-binding</keyword>
<keyword id="KW-0573">Peptidoglycan synthesis</keyword>
<accession>Q2JVR9</accession>
<reference key="1">
    <citation type="journal article" date="2007" name="ISME J.">
        <title>Population level functional diversity in a microbial community revealed by comparative genomic and metagenomic analyses.</title>
        <authorList>
            <person name="Bhaya D."/>
            <person name="Grossman A.R."/>
            <person name="Steunou A.-S."/>
            <person name="Khuri N."/>
            <person name="Cohan F.M."/>
            <person name="Hamamura N."/>
            <person name="Melendrez M.C."/>
            <person name="Bateson M.M."/>
            <person name="Ward D.M."/>
            <person name="Heidelberg J.F."/>
        </authorList>
    </citation>
    <scope>NUCLEOTIDE SEQUENCE [LARGE SCALE GENOMIC DNA]</scope>
    <source>
        <strain>JA-3-3Ab</strain>
    </source>
</reference>
<comment type="function">
    <text evidence="1">Cell wall formation. Catalyzes the addition of glutamate to the nucleotide precursor UDP-N-acetylmuramoyl-L-alanine (UMA).</text>
</comment>
<comment type="catalytic activity">
    <reaction evidence="1">
        <text>UDP-N-acetyl-alpha-D-muramoyl-L-alanine + D-glutamate + ATP = UDP-N-acetyl-alpha-D-muramoyl-L-alanyl-D-glutamate + ADP + phosphate + H(+)</text>
        <dbReference type="Rhea" id="RHEA:16429"/>
        <dbReference type="ChEBI" id="CHEBI:15378"/>
        <dbReference type="ChEBI" id="CHEBI:29986"/>
        <dbReference type="ChEBI" id="CHEBI:30616"/>
        <dbReference type="ChEBI" id="CHEBI:43474"/>
        <dbReference type="ChEBI" id="CHEBI:83898"/>
        <dbReference type="ChEBI" id="CHEBI:83900"/>
        <dbReference type="ChEBI" id="CHEBI:456216"/>
        <dbReference type="EC" id="6.3.2.9"/>
    </reaction>
</comment>
<comment type="pathway">
    <text evidence="1">Cell wall biogenesis; peptidoglycan biosynthesis.</text>
</comment>
<comment type="subcellular location">
    <subcellularLocation>
        <location evidence="1">Cytoplasm</location>
    </subcellularLocation>
</comment>
<comment type="similarity">
    <text evidence="1">Belongs to the MurCDEF family.</text>
</comment>
<evidence type="ECO:0000255" key="1">
    <source>
        <dbReference type="HAMAP-Rule" id="MF_00639"/>
    </source>
</evidence>
<proteinExistence type="inferred from homology"/>
<dbReference type="EC" id="6.3.2.9" evidence="1"/>
<dbReference type="EMBL" id="CP000239">
    <property type="protein sequence ID" value="ABC99162.1"/>
    <property type="molecule type" value="Genomic_DNA"/>
</dbReference>
<dbReference type="RefSeq" id="WP_011429845.1">
    <property type="nucleotide sequence ID" value="NC_007775.1"/>
</dbReference>
<dbReference type="SMR" id="Q2JVR9"/>
<dbReference type="STRING" id="321327.CYA_0960"/>
<dbReference type="KEGG" id="cya:CYA_0960"/>
<dbReference type="eggNOG" id="COG0771">
    <property type="taxonomic scope" value="Bacteria"/>
</dbReference>
<dbReference type="HOGENOM" id="CLU_032540_0_0_3"/>
<dbReference type="OrthoDB" id="9809796at2"/>
<dbReference type="UniPathway" id="UPA00219"/>
<dbReference type="Proteomes" id="UP000008818">
    <property type="component" value="Chromosome"/>
</dbReference>
<dbReference type="GO" id="GO:0005737">
    <property type="term" value="C:cytoplasm"/>
    <property type="evidence" value="ECO:0007669"/>
    <property type="project" value="UniProtKB-SubCell"/>
</dbReference>
<dbReference type="GO" id="GO:0005524">
    <property type="term" value="F:ATP binding"/>
    <property type="evidence" value="ECO:0007669"/>
    <property type="project" value="UniProtKB-UniRule"/>
</dbReference>
<dbReference type="GO" id="GO:0008764">
    <property type="term" value="F:UDP-N-acetylmuramoylalanine-D-glutamate ligase activity"/>
    <property type="evidence" value="ECO:0007669"/>
    <property type="project" value="UniProtKB-UniRule"/>
</dbReference>
<dbReference type="GO" id="GO:0051301">
    <property type="term" value="P:cell division"/>
    <property type="evidence" value="ECO:0007669"/>
    <property type="project" value="UniProtKB-KW"/>
</dbReference>
<dbReference type="GO" id="GO:0071555">
    <property type="term" value="P:cell wall organization"/>
    <property type="evidence" value="ECO:0007669"/>
    <property type="project" value="UniProtKB-KW"/>
</dbReference>
<dbReference type="GO" id="GO:0009252">
    <property type="term" value="P:peptidoglycan biosynthetic process"/>
    <property type="evidence" value="ECO:0007669"/>
    <property type="project" value="UniProtKB-UniRule"/>
</dbReference>
<dbReference type="GO" id="GO:0008360">
    <property type="term" value="P:regulation of cell shape"/>
    <property type="evidence" value="ECO:0007669"/>
    <property type="project" value="UniProtKB-KW"/>
</dbReference>
<dbReference type="Gene3D" id="3.90.190.20">
    <property type="entry name" value="Mur ligase, C-terminal domain"/>
    <property type="match status" value="1"/>
</dbReference>
<dbReference type="Gene3D" id="3.40.1190.10">
    <property type="entry name" value="Mur-like, catalytic domain"/>
    <property type="match status" value="1"/>
</dbReference>
<dbReference type="Gene3D" id="3.40.50.720">
    <property type="entry name" value="NAD(P)-binding Rossmann-like Domain"/>
    <property type="match status" value="1"/>
</dbReference>
<dbReference type="HAMAP" id="MF_00639">
    <property type="entry name" value="MurD"/>
    <property type="match status" value="1"/>
</dbReference>
<dbReference type="InterPro" id="IPR036565">
    <property type="entry name" value="Mur-like_cat_sf"/>
</dbReference>
<dbReference type="InterPro" id="IPR036615">
    <property type="entry name" value="Mur_ligase_C_dom_sf"/>
</dbReference>
<dbReference type="InterPro" id="IPR013221">
    <property type="entry name" value="Mur_ligase_cen"/>
</dbReference>
<dbReference type="InterPro" id="IPR005762">
    <property type="entry name" value="MurD"/>
</dbReference>
<dbReference type="NCBIfam" id="TIGR01087">
    <property type="entry name" value="murD"/>
    <property type="match status" value="1"/>
</dbReference>
<dbReference type="PANTHER" id="PTHR43692">
    <property type="entry name" value="UDP-N-ACETYLMURAMOYLALANINE--D-GLUTAMATE LIGASE"/>
    <property type="match status" value="1"/>
</dbReference>
<dbReference type="PANTHER" id="PTHR43692:SF1">
    <property type="entry name" value="UDP-N-ACETYLMURAMOYLALANINE--D-GLUTAMATE LIGASE"/>
    <property type="match status" value="1"/>
</dbReference>
<dbReference type="Pfam" id="PF08245">
    <property type="entry name" value="Mur_ligase_M"/>
    <property type="match status" value="1"/>
</dbReference>
<dbReference type="Pfam" id="PF21799">
    <property type="entry name" value="MurD-like_N"/>
    <property type="match status" value="1"/>
</dbReference>
<dbReference type="SUPFAM" id="SSF51984">
    <property type="entry name" value="MurCD N-terminal domain"/>
    <property type="match status" value="1"/>
</dbReference>
<dbReference type="SUPFAM" id="SSF53623">
    <property type="entry name" value="MurD-like peptide ligases, catalytic domain"/>
    <property type="match status" value="1"/>
</dbReference>
<dbReference type="SUPFAM" id="SSF53244">
    <property type="entry name" value="MurD-like peptide ligases, peptide-binding domain"/>
    <property type="match status" value="1"/>
</dbReference>
<name>MURD_SYNJA</name>
<gene>
    <name evidence="1" type="primary">murD</name>
    <name type="ordered locus">CYA_0960</name>
</gene>
<feature type="chain" id="PRO_0000257255" description="UDP-N-acetylmuramoylalanine--D-glutamate ligase">
    <location>
        <begin position="1"/>
        <end position="469"/>
    </location>
</feature>
<feature type="binding site" evidence="1">
    <location>
        <begin position="110"/>
        <end position="116"/>
    </location>
    <ligand>
        <name>ATP</name>
        <dbReference type="ChEBI" id="CHEBI:30616"/>
    </ligand>
</feature>